<keyword id="KW-0133">Cell shape</keyword>
<keyword id="KW-0963">Cytoplasm</keyword>
<keyword id="KW-0206">Cytoskeleton</keyword>
<keyword id="KW-0597">Phosphoprotein</keyword>
<keyword id="KW-1185">Reference proteome</keyword>
<sequence length="383" mass="42852">MTSASITNTGNETMNLPQMRSIWLDEDEEAEKLYGLQAQQFMGSDDEENLGITFINSDKPVLSNKKNIELPPLSPNSHPSCHHRRSNSNSAKSKESSSSSSSANKTNHKKVFLKLNLLKKKLLGAQPDIRGKGISTPFDFQHISHADTRNGFQDEQLQEPSSLSTEIKDDYTSSSSKRDSKSLNKAFVTERIPANRESKLISRSHENKTSRLSVARSISVTSSNYSKNTQGNNHSINGRVVSTSTMATSIFEYSPNASPKQFKNKSHALGHRYTNSTDSSESSLDFLKNYNFPTLLEDKPILDFLPRSQRSSAYRSLLETPNSNKDSAKAFFPSRQSPLPKRRNSIATPSPQSKFSYSDSPVNHRKSFDDVLYSFNQLEPLQT</sequence>
<gene>
    <name type="primary">GIC2</name>
    <name type="ordered locus">YDR309C</name>
    <name type="ORF">D9740.18</name>
</gene>
<name>GIC2_YEAST</name>
<feature type="chain" id="PRO_0000212660" description="GTPase-interacting component 2">
    <location>
        <begin position="1"/>
        <end position="383"/>
    </location>
</feature>
<feature type="domain" description="CRIB" evidence="2">
    <location>
        <begin position="134"/>
        <end position="147"/>
    </location>
</feature>
<feature type="region of interest" description="Disordered" evidence="3">
    <location>
        <begin position="63"/>
        <end position="106"/>
    </location>
</feature>
<feature type="region of interest" description="Disordered" evidence="3">
    <location>
        <begin position="155"/>
        <end position="189"/>
    </location>
</feature>
<feature type="region of interest" description="Disordered" evidence="3">
    <location>
        <begin position="319"/>
        <end position="361"/>
    </location>
</feature>
<feature type="compositionally biased region" description="Low complexity" evidence="3">
    <location>
        <begin position="87"/>
        <end position="105"/>
    </location>
</feature>
<feature type="compositionally biased region" description="Polar residues" evidence="3">
    <location>
        <begin position="155"/>
        <end position="165"/>
    </location>
</feature>
<feature type="compositionally biased region" description="Basic and acidic residues" evidence="3">
    <location>
        <begin position="166"/>
        <end position="182"/>
    </location>
</feature>
<feature type="compositionally biased region" description="Polar residues" evidence="3">
    <location>
        <begin position="345"/>
        <end position="361"/>
    </location>
</feature>
<feature type="modified residue" description="Phosphoserine" evidence="7">
    <location>
        <position position="254"/>
    </location>
</feature>
<feature type="modified residue" description="Phosphoserine" evidence="7">
    <location>
        <position position="258"/>
    </location>
</feature>
<feature type="modified residue" description="Phosphoserine" evidence="8">
    <location>
        <position position="337"/>
    </location>
</feature>
<feature type="modified residue" description="Phosphoserine" evidence="6 9">
    <location>
        <position position="345"/>
    </location>
</feature>
<feature type="modified residue" description="Phosphoserine" evidence="7">
    <location>
        <position position="367"/>
    </location>
</feature>
<protein>
    <recommendedName>
        <fullName>GTPase-interacting component 2</fullName>
    </recommendedName>
</protein>
<organism>
    <name type="scientific">Saccharomyces cerevisiae (strain ATCC 204508 / S288c)</name>
    <name type="common">Baker's yeast</name>
    <dbReference type="NCBI Taxonomy" id="559292"/>
    <lineage>
        <taxon>Eukaryota</taxon>
        <taxon>Fungi</taxon>
        <taxon>Dikarya</taxon>
        <taxon>Ascomycota</taxon>
        <taxon>Saccharomycotina</taxon>
        <taxon>Saccharomycetes</taxon>
        <taxon>Saccharomycetales</taxon>
        <taxon>Saccharomycetaceae</taxon>
        <taxon>Saccharomyces</taxon>
    </lineage>
</organism>
<comment type="function">
    <text>Required for cell size and shape control, bud site selection, bud emergence, actin cytoskeletal organization, mitotic spindle orientation/positioning, and mating projection formation in response to mating pheromone.</text>
</comment>
<comment type="subunit">
    <text>Interacts with GTP-bound CDC42.</text>
</comment>
<comment type="interaction">
    <interactant intactId="EBI-7585">
        <id>Q06648</id>
    </interactant>
    <interactant intactId="EBI-4178">
        <id>P32458</id>
        <label>CDC11</label>
    </interactant>
    <organismsDiffer>false</organismsDiffer>
    <experiments>2</experiments>
</comment>
<comment type="interaction">
    <interactant intactId="EBI-7585">
        <id>Q06648</id>
    </interactant>
    <interactant intactId="EBI-4182">
        <id>P32468</id>
        <label>CDC12</label>
    </interactant>
    <organismsDiffer>false</organismsDiffer>
    <experiments>5</experiments>
</comment>
<comment type="interaction">
    <interactant intactId="EBI-7585">
        <id>Q06648</id>
    </interactant>
    <interactant intactId="EBI-4429">
        <id>P32457</id>
        <label>CDC3</label>
    </interactant>
    <organismsDiffer>false</organismsDiffer>
    <experiments>3</experiments>
</comment>
<comment type="subcellular location">
    <subcellularLocation>
        <location evidence="1">Bud neck</location>
    </subcellularLocation>
    <subcellularLocation>
        <location evidence="1">Bud tip</location>
    </subcellularLocation>
    <subcellularLocation>
        <location evidence="1">Cytoplasm</location>
        <location evidence="1">Cell cortex</location>
    </subcellularLocation>
    <subcellularLocation>
        <location evidence="1">Cytoplasm</location>
        <location evidence="1">Cytoskeleton</location>
    </subcellularLocation>
</comment>
<comment type="miscellaneous">
    <text evidence="4">Present with 1130 molecules/cell in log phase SD medium.</text>
</comment>
<comment type="similarity">
    <text evidence="5">Belongs to the BORG/CEP family.</text>
</comment>
<evidence type="ECO:0000250" key="1"/>
<evidence type="ECO:0000255" key="2">
    <source>
        <dbReference type="PROSITE-ProRule" id="PRU00057"/>
    </source>
</evidence>
<evidence type="ECO:0000256" key="3">
    <source>
        <dbReference type="SAM" id="MobiDB-lite"/>
    </source>
</evidence>
<evidence type="ECO:0000269" key="4">
    <source>
    </source>
</evidence>
<evidence type="ECO:0000305" key="5"/>
<evidence type="ECO:0007744" key="6">
    <source>
    </source>
</evidence>
<evidence type="ECO:0007744" key="7">
    <source>
    </source>
</evidence>
<evidence type="ECO:0007744" key="8">
    <source>
    </source>
</evidence>
<evidence type="ECO:0007744" key="9">
    <source>
    </source>
</evidence>
<accession>Q06648</accession>
<accession>D6VST8</accession>
<reference key="1">
    <citation type="journal article" date="1997" name="Nature">
        <title>The nucleotide sequence of Saccharomyces cerevisiae chromosome IV.</title>
        <authorList>
            <person name="Jacq C."/>
            <person name="Alt-Moerbe J."/>
            <person name="Andre B."/>
            <person name="Arnold W."/>
            <person name="Bahr A."/>
            <person name="Ballesta J.P.G."/>
            <person name="Bargues M."/>
            <person name="Baron L."/>
            <person name="Becker A."/>
            <person name="Biteau N."/>
            <person name="Bloecker H."/>
            <person name="Blugeon C."/>
            <person name="Boskovic J."/>
            <person name="Brandt P."/>
            <person name="Brueckner M."/>
            <person name="Buitrago M.J."/>
            <person name="Coster F."/>
            <person name="Delaveau T."/>
            <person name="del Rey F."/>
            <person name="Dujon B."/>
            <person name="Eide L.G."/>
            <person name="Garcia-Cantalejo J.M."/>
            <person name="Goffeau A."/>
            <person name="Gomez-Peris A."/>
            <person name="Granotier C."/>
            <person name="Hanemann V."/>
            <person name="Hankeln T."/>
            <person name="Hoheisel J.D."/>
            <person name="Jaeger W."/>
            <person name="Jimenez A."/>
            <person name="Jonniaux J.-L."/>
            <person name="Kraemer C."/>
            <person name="Kuester H."/>
            <person name="Laamanen P."/>
            <person name="Legros Y."/>
            <person name="Louis E.J."/>
            <person name="Moeller-Rieker S."/>
            <person name="Monnet A."/>
            <person name="Moro M."/>
            <person name="Mueller-Auer S."/>
            <person name="Nussbaumer B."/>
            <person name="Paricio N."/>
            <person name="Paulin L."/>
            <person name="Perea J."/>
            <person name="Perez-Alonso M."/>
            <person name="Perez-Ortin J.E."/>
            <person name="Pohl T.M."/>
            <person name="Prydz H."/>
            <person name="Purnelle B."/>
            <person name="Rasmussen S.W."/>
            <person name="Remacha M.A."/>
            <person name="Revuelta J.L."/>
            <person name="Rieger M."/>
            <person name="Salom D."/>
            <person name="Saluz H.P."/>
            <person name="Saiz J.E."/>
            <person name="Saren A.-M."/>
            <person name="Schaefer M."/>
            <person name="Scharfe M."/>
            <person name="Schmidt E.R."/>
            <person name="Schneider C."/>
            <person name="Scholler P."/>
            <person name="Schwarz S."/>
            <person name="Soler-Mira A."/>
            <person name="Urrestarazu L.A."/>
            <person name="Verhasselt P."/>
            <person name="Vissers S."/>
            <person name="Voet M."/>
            <person name="Volckaert G."/>
            <person name="Wagner G."/>
            <person name="Wambutt R."/>
            <person name="Wedler E."/>
            <person name="Wedler H."/>
            <person name="Woelfl S."/>
            <person name="Harris D.E."/>
            <person name="Bowman S."/>
            <person name="Brown D."/>
            <person name="Churcher C.M."/>
            <person name="Connor R."/>
            <person name="Dedman K."/>
            <person name="Gentles S."/>
            <person name="Hamlin N."/>
            <person name="Hunt S."/>
            <person name="Jones L."/>
            <person name="McDonald S."/>
            <person name="Murphy L.D."/>
            <person name="Niblett D."/>
            <person name="Odell C."/>
            <person name="Oliver K."/>
            <person name="Rajandream M.A."/>
            <person name="Richards C."/>
            <person name="Shore L."/>
            <person name="Walsh S.V."/>
            <person name="Barrell B.G."/>
            <person name="Dietrich F.S."/>
            <person name="Mulligan J.T."/>
            <person name="Allen E."/>
            <person name="Araujo R."/>
            <person name="Aviles E."/>
            <person name="Berno A."/>
            <person name="Carpenter J."/>
            <person name="Chen E."/>
            <person name="Cherry J.M."/>
            <person name="Chung E."/>
            <person name="Duncan M."/>
            <person name="Hunicke-Smith S."/>
            <person name="Hyman R.W."/>
            <person name="Komp C."/>
            <person name="Lashkari D."/>
            <person name="Lew H."/>
            <person name="Lin D."/>
            <person name="Mosedale D."/>
            <person name="Nakahara K."/>
            <person name="Namath A."/>
            <person name="Oefner P."/>
            <person name="Oh C."/>
            <person name="Petel F.X."/>
            <person name="Roberts D."/>
            <person name="Schramm S."/>
            <person name="Schroeder M."/>
            <person name="Shogren T."/>
            <person name="Shroff N."/>
            <person name="Winant A."/>
            <person name="Yelton M.A."/>
            <person name="Botstein D."/>
            <person name="Davis R.W."/>
            <person name="Johnston M."/>
            <person name="Andrews S."/>
            <person name="Brinkman R."/>
            <person name="Cooper J."/>
            <person name="Ding H."/>
            <person name="Du Z."/>
            <person name="Favello A."/>
            <person name="Fulton L."/>
            <person name="Gattung S."/>
            <person name="Greco T."/>
            <person name="Hallsworth K."/>
            <person name="Hawkins J."/>
            <person name="Hillier L.W."/>
            <person name="Jier M."/>
            <person name="Johnson D."/>
            <person name="Johnston L."/>
            <person name="Kirsten J."/>
            <person name="Kucaba T."/>
            <person name="Langston Y."/>
            <person name="Latreille P."/>
            <person name="Le T."/>
            <person name="Mardis E."/>
            <person name="Menezes S."/>
            <person name="Miller N."/>
            <person name="Nhan M."/>
            <person name="Pauley A."/>
            <person name="Peluso D."/>
            <person name="Rifkin L."/>
            <person name="Riles L."/>
            <person name="Taich A."/>
            <person name="Trevaskis E."/>
            <person name="Vignati D."/>
            <person name="Wilcox L."/>
            <person name="Wohldman P."/>
            <person name="Vaudin M."/>
            <person name="Wilson R."/>
            <person name="Waterston R."/>
            <person name="Albermann K."/>
            <person name="Hani J."/>
            <person name="Heumann K."/>
            <person name="Kleine K."/>
            <person name="Mewes H.-W."/>
            <person name="Zollner A."/>
            <person name="Zaccaria P."/>
        </authorList>
    </citation>
    <scope>NUCLEOTIDE SEQUENCE [LARGE SCALE GENOMIC DNA]</scope>
    <source>
        <strain>ATCC 204508 / S288c</strain>
    </source>
</reference>
<reference key="2">
    <citation type="journal article" date="2014" name="G3 (Bethesda)">
        <title>The reference genome sequence of Saccharomyces cerevisiae: Then and now.</title>
        <authorList>
            <person name="Engel S.R."/>
            <person name="Dietrich F.S."/>
            <person name="Fisk D.G."/>
            <person name="Binkley G."/>
            <person name="Balakrishnan R."/>
            <person name="Costanzo M.C."/>
            <person name="Dwight S.S."/>
            <person name="Hitz B.C."/>
            <person name="Karra K."/>
            <person name="Nash R.S."/>
            <person name="Weng S."/>
            <person name="Wong E.D."/>
            <person name="Lloyd P."/>
            <person name="Skrzypek M.S."/>
            <person name="Miyasato S.R."/>
            <person name="Simison M."/>
            <person name="Cherry J.M."/>
        </authorList>
    </citation>
    <scope>GENOME REANNOTATION</scope>
    <source>
        <strain>ATCC 204508 / S288c</strain>
    </source>
</reference>
<reference key="3">
    <citation type="journal article" date="2007" name="Genome Res.">
        <title>Approaching a complete repository of sequence-verified protein-encoding clones for Saccharomyces cerevisiae.</title>
        <authorList>
            <person name="Hu Y."/>
            <person name="Rolfs A."/>
            <person name="Bhullar B."/>
            <person name="Murthy T.V.S."/>
            <person name="Zhu C."/>
            <person name="Berger M.F."/>
            <person name="Camargo A.A."/>
            <person name="Kelley F."/>
            <person name="McCarron S."/>
            <person name="Jepson D."/>
            <person name="Richardson A."/>
            <person name="Raphael J."/>
            <person name="Moreira D."/>
            <person name="Taycher E."/>
            <person name="Zuo D."/>
            <person name="Mohr S."/>
            <person name="Kane M.F."/>
            <person name="Williamson J."/>
            <person name="Simpson A.J.G."/>
            <person name="Bulyk M.L."/>
            <person name="Harlow E."/>
            <person name="Marsischky G."/>
            <person name="Kolodner R.D."/>
            <person name="LaBaer J."/>
        </authorList>
    </citation>
    <scope>NUCLEOTIDE SEQUENCE [GENOMIC DNA]</scope>
    <source>
        <strain>ATCC 204508 / S288c</strain>
    </source>
</reference>
<reference key="4">
    <citation type="journal article" date="1997" name="Genes Dev.">
        <title>The Cdc42 GTPase-associated proteins Gic1 and Gic2 are required for polarized cell growth in Saccharomyces cerevisiae.</title>
        <authorList>
            <person name="Chen G.C."/>
            <person name="Kim Y.J."/>
            <person name="Chan C.S."/>
        </authorList>
    </citation>
    <scope>CHARACTERIZATION</scope>
</reference>
<reference key="5">
    <citation type="journal article" date="1997" name="Genes Dev.">
        <title>Novel Cdc42-binding proteins Gic1 and Gic2 control cell polarity in yeast.</title>
        <authorList>
            <person name="Brown J.L."/>
            <person name="Jaquenoud M."/>
            <person name="Gulli M.P."/>
            <person name="Chant J."/>
            <person name="Peter M."/>
        </authorList>
    </citation>
    <scope>CHARACTERIZATION</scope>
</reference>
<reference key="6">
    <citation type="journal article" date="2003" name="Nature">
        <title>Global analysis of protein expression in yeast.</title>
        <authorList>
            <person name="Ghaemmaghami S."/>
            <person name="Huh W.-K."/>
            <person name="Bower K."/>
            <person name="Howson R.W."/>
            <person name="Belle A."/>
            <person name="Dephoure N."/>
            <person name="O'Shea E.K."/>
            <person name="Weissman J.S."/>
        </authorList>
    </citation>
    <scope>LEVEL OF PROTEIN EXPRESSION [LARGE SCALE ANALYSIS]</scope>
</reference>
<reference key="7">
    <citation type="journal article" date="2007" name="J. Proteome Res.">
        <title>Large-scale phosphorylation analysis of alpha-factor-arrested Saccharomyces cerevisiae.</title>
        <authorList>
            <person name="Li X."/>
            <person name="Gerber S.A."/>
            <person name="Rudner A.D."/>
            <person name="Beausoleil S.A."/>
            <person name="Haas W."/>
            <person name="Villen J."/>
            <person name="Elias J.E."/>
            <person name="Gygi S.P."/>
        </authorList>
    </citation>
    <scope>PHOSPHORYLATION [LARGE SCALE ANALYSIS] AT SER-254; SER-258 AND SER-367</scope>
    <scope>IDENTIFICATION BY MASS SPECTROMETRY [LARGE SCALE ANALYSIS]</scope>
    <source>
        <strain>ADR376</strain>
    </source>
</reference>
<reference key="8">
    <citation type="journal article" date="2007" name="Proc. Natl. Acad. Sci. U.S.A.">
        <title>Analysis of phosphorylation sites on proteins from Saccharomyces cerevisiae by electron transfer dissociation (ETD) mass spectrometry.</title>
        <authorList>
            <person name="Chi A."/>
            <person name="Huttenhower C."/>
            <person name="Geer L.Y."/>
            <person name="Coon J.J."/>
            <person name="Syka J.E.P."/>
            <person name="Bai D.L."/>
            <person name="Shabanowitz J."/>
            <person name="Burke D.J."/>
            <person name="Troyanskaya O.G."/>
            <person name="Hunt D.F."/>
        </authorList>
    </citation>
    <scope>PHOSPHORYLATION [LARGE SCALE ANALYSIS] AT SER-345</scope>
    <scope>IDENTIFICATION BY MASS SPECTROMETRY [LARGE SCALE ANALYSIS]</scope>
</reference>
<reference key="9">
    <citation type="journal article" date="2008" name="Mol. Cell. Proteomics">
        <title>A multidimensional chromatography technology for in-depth phosphoproteome analysis.</title>
        <authorList>
            <person name="Albuquerque C.P."/>
            <person name="Smolka M.B."/>
            <person name="Payne S.H."/>
            <person name="Bafna V."/>
            <person name="Eng J."/>
            <person name="Zhou H."/>
        </authorList>
    </citation>
    <scope>PHOSPHORYLATION [LARGE SCALE ANALYSIS] AT SER-337</scope>
    <scope>IDENTIFICATION BY MASS SPECTROMETRY [LARGE SCALE ANALYSIS]</scope>
</reference>
<reference key="10">
    <citation type="journal article" date="2009" name="Science">
        <title>Global analysis of Cdk1 substrate phosphorylation sites provides insights into evolution.</title>
        <authorList>
            <person name="Holt L.J."/>
            <person name="Tuch B.B."/>
            <person name="Villen J."/>
            <person name="Johnson A.D."/>
            <person name="Gygi S.P."/>
            <person name="Morgan D.O."/>
        </authorList>
    </citation>
    <scope>PHOSPHORYLATION [LARGE SCALE ANALYSIS] AT SER-345</scope>
    <scope>IDENTIFICATION BY MASS SPECTROMETRY [LARGE SCALE ANALYSIS]</scope>
</reference>
<reference key="11">
    <citation type="journal article" date="2012" name="Proc. Natl. Acad. Sci. U.S.A.">
        <title>N-terminal acetylome analyses and functional insights of the N-terminal acetyltransferase NatB.</title>
        <authorList>
            <person name="Van Damme P."/>
            <person name="Lasa M."/>
            <person name="Polevoda B."/>
            <person name="Gazquez C."/>
            <person name="Elosegui-Artola A."/>
            <person name="Kim D.S."/>
            <person name="De Juan-Pardo E."/>
            <person name="Demeyer K."/>
            <person name="Hole K."/>
            <person name="Larrea E."/>
            <person name="Timmerman E."/>
            <person name="Prieto J."/>
            <person name="Arnesen T."/>
            <person name="Sherman F."/>
            <person name="Gevaert K."/>
            <person name="Aldabe R."/>
        </authorList>
    </citation>
    <scope>IDENTIFICATION BY MASS SPECTROMETRY [LARGE SCALE ANALYSIS]</scope>
</reference>
<proteinExistence type="evidence at protein level"/>
<dbReference type="EMBL" id="U28374">
    <property type="protein sequence ID" value="AAB64745.1"/>
    <property type="molecule type" value="Genomic_DNA"/>
</dbReference>
<dbReference type="EMBL" id="AY557791">
    <property type="protein sequence ID" value="AAS56117.1"/>
    <property type="molecule type" value="Genomic_DNA"/>
</dbReference>
<dbReference type="EMBL" id="BK006938">
    <property type="protein sequence ID" value="DAA12148.1"/>
    <property type="molecule type" value="Genomic_DNA"/>
</dbReference>
<dbReference type="PIR" id="S61195">
    <property type="entry name" value="S61195"/>
</dbReference>
<dbReference type="RefSeq" id="NP_010595.1">
    <property type="nucleotide sequence ID" value="NM_001180617.1"/>
</dbReference>
<dbReference type="BioGRID" id="32362">
    <property type="interactions" value="133"/>
</dbReference>
<dbReference type="DIP" id="DIP-2277N"/>
<dbReference type="FunCoup" id="Q06648">
    <property type="interactions" value="120"/>
</dbReference>
<dbReference type="IntAct" id="Q06648">
    <property type="interactions" value="28"/>
</dbReference>
<dbReference type="MINT" id="Q06648"/>
<dbReference type="STRING" id="4932.YDR309C"/>
<dbReference type="iPTMnet" id="Q06648"/>
<dbReference type="PaxDb" id="4932-YDR309C"/>
<dbReference type="PeptideAtlas" id="Q06648"/>
<dbReference type="EnsemblFungi" id="YDR309C_mRNA">
    <property type="protein sequence ID" value="YDR309C"/>
    <property type="gene ID" value="YDR309C"/>
</dbReference>
<dbReference type="GeneID" id="851904"/>
<dbReference type="KEGG" id="sce:YDR309C"/>
<dbReference type="AGR" id="SGD:S000002717"/>
<dbReference type="SGD" id="S000002717">
    <property type="gene designation" value="GIC2"/>
</dbReference>
<dbReference type="VEuPathDB" id="FungiDB:YDR309C"/>
<dbReference type="eggNOG" id="ENOG502S2B5">
    <property type="taxonomic scope" value="Eukaryota"/>
</dbReference>
<dbReference type="GeneTree" id="ENSGT00940000176666"/>
<dbReference type="HOGENOM" id="CLU_045871_0_0_1"/>
<dbReference type="InParanoid" id="Q06648"/>
<dbReference type="OMA" id="PFAFQHI"/>
<dbReference type="OrthoDB" id="4070688at2759"/>
<dbReference type="BioCyc" id="YEAST:G3O-29868-MONOMER"/>
<dbReference type="BioGRID-ORCS" id="851904">
    <property type="hits" value="4 hits in 10 CRISPR screens"/>
</dbReference>
<dbReference type="PRO" id="PR:Q06648"/>
<dbReference type="Proteomes" id="UP000002311">
    <property type="component" value="Chromosome IV"/>
</dbReference>
<dbReference type="RNAct" id="Q06648">
    <property type="molecule type" value="protein"/>
</dbReference>
<dbReference type="GO" id="GO:0005938">
    <property type="term" value="C:cell cortex"/>
    <property type="evidence" value="ECO:0007669"/>
    <property type="project" value="UniProtKB-SubCell"/>
</dbReference>
<dbReference type="GO" id="GO:0005935">
    <property type="term" value="C:cellular bud neck"/>
    <property type="evidence" value="ECO:0007669"/>
    <property type="project" value="UniProtKB-SubCell"/>
</dbReference>
<dbReference type="GO" id="GO:0005934">
    <property type="term" value="C:cellular bud tip"/>
    <property type="evidence" value="ECO:0000314"/>
    <property type="project" value="SGD"/>
</dbReference>
<dbReference type="GO" id="GO:0005856">
    <property type="term" value="C:cytoskeleton"/>
    <property type="evidence" value="ECO:0007669"/>
    <property type="project" value="UniProtKB-SubCell"/>
</dbReference>
<dbReference type="GO" id="GO:0000131">
    <property type="term" value="C:incipient cellular bud site"/>
    <property type="evidence" value="ECO:0000314"/>
    <property type="project" value="SGD"/>
</dbReference>
<dbReference type="GO" id="GO:0043332">
    <property type="term" value="C:mating projection tip"/>
    <property type="evidence" value="ECO:0000314"/>
    <property type="project" value="SGD"/>
</dbReference>
<dbReference type="GO" id="GO:0005886">
    <property type="term" value="C:plasma membrane"/>
    <property type="evidence" value="ECO:0000316"/>
    <property type="project" value="SGD"/>
</dbReference>
<dbReference type="GO" id="GO:0005546">
    <property type="term" value="F:phosphatidylinositol-4,5-bisphosphate binding"/>
    <property type="evidence" value="ECO:0000314"/>
    <property type="project" value="SGD"/>
</dbReference>
<dbReference type="GO" id="GO:0031267">
    <property type="term" value="F:small GTPase binding"/>
    <property type="evidence" value="ECO:0000353"/>
    <property type="project" value="SGD"/>
</dbReference>
<dbReference type="GO" id="GO:0032488">
    <property type="term" value="P:Cdc42 protein signal transduction"/>
    <property type="evidence" value="ECO:0000316"/>
    <property type="project" value="SGD"/>
</dbReference>
<dbReference type="GO" id="GO:0030010">
    <property type="term" value="P:establishment of cell polarity"/>
    <property type="evidence" value="ECO:0000316"/>
    <property type="project" value="SGD"/>
</dbReference>
<dbReference type="GO" id="GO:0090338">
    <property type="term" value="P:positive regulation of formin-nucleated actin cable assembly"/>
    <property type="evidence" value="ECO:0000315"/>
    <property type="project" value="SGD"/>
</dbReference>
<dbReference type="GO" id="GO:0008360">
    <property type="term" value="P:regulation of cell shape"/>
    <property type="evidence" value="ECO:0007669"/>
    <property type="project" value="UniProtKB-KW"/>
</dbReference>
<dbReference type="GO" id="GO:0007096">
    <property type="term" value="P:regulation of exit from mitosis"/>
    <property type="evidence" value="ECO:0000315"/>
    <property type="project" value="SGD"/>
</dbReference>
<dbReference type="GO" id="GO:0031106">
    <property type="term" value="P:septin ring organization"/>
    <property type="evidence" value="ECO:0000316"/>
    <property type="project" value="SGD"/>
</dbReference>
<dbReference type="CDD" id="cd00132">
    <property type="entry name" value="CRIB"/>
    <property type="match status" value="1"/>
</dbReference>
<dbReference type="InterPro" id="IPR000095">
    <property type="entry name" value="CRIB_dom"/>
</dbReference>
<dbReference type="SMART" id="SM00285">
    <property type="entry name" value="PBD"/>
    <property type="match status" value="1"/>
</dbReference>
<dbReference type="PROSITE" id="PS50108">
    <property type="entry name" value="CRIB"/>
    <property type="match status" value="1"/>
</dbReference>